<sequence length="235" mass="25621">MKKAVVVFSGGQDSTTCLVQALSRYDEVHAITFDYGQRHREEIETARRLASQLGIAAHKVMDVTMLGELAISALTRDEIPVSFELQDNGLPNTFVPGRNILFLTLAAIYAYQVGAEAVITGVCETDFSGYPDCRDEFVKALNQAVSLGLDRAIRFETPLMWLDKAETWALADHYGHLDTVRQQTLTCYNGIAGDGCGACPACDLRSRGLQQYLADKAGVAARLHQKTGLGEKSGC</sequence>
<evidence type="ECO:0000255" key="1">
    <source>
        <dbReference type="HAMAP-Rule" id="MF_01633"/>
    </source>
</evidence>
<gene>
    <name evidence="1" type="primary">queC</name>
    <name type="ordered locus">AHA_1816</name>
</gene>
<proteinExistence type="inferred from homology"/>
<comment type="function">
    <text evidence="1">Catalyzes the ATP-dependent conversion of 7-carboxy-7-deazaguanine (CDG) to 7-cyano-7-deazaguanine (preQ(0)).</text>
</comment>
<comment type="catalytic activity">
    <reaction evidence="1">
        <text>7-carboxy-7-deazaguanine + NH4(+) + ATP = 7-cyano-7-deazaguanine + ADP + phosphate + H2O + H(+)</text>
        <dbReference type="Rhea" id="RHEA:27982"/>
        <dbReference type="ChEBI" id="CHEBI:15377"/>
        <dbReference type="ChEBI" id="CHEBI:15378"/>
        <dbReference type="ChEBI" id="CHEBI:28938"/>
        <dbReference type="ChEBI" id="CHEBI:30616"/>
        <dbReference type="ChEBI" id="CHEBI:43474"/>
        <dbReference type="ChEBI" id="CHEBI:45075"/>
        <dbReference type="ChEBI" id="CHEBI:61036"/>
        <dbReference type="ChEBI" id="CHEBI:456216"/>
        <dbReference type="EC" id="6.3.4.20"/>
    </reaction>
</comment>
<comment type="cofactor">
    <cofactor evidence="1">
        <name>Zn(2+)</name>
        <dbReference type="ChEBI" id="CHEBI:29105"/>
    </cofactor>
    <text evidence="1">Binds 1 zinc ion per subunit.</text>
</comment>
<comment type="pathway">
    <text evidence="1">Purine metabolism; 7-cyano-7-deazaguanine biosynthesis.</text>
</comment>
<comment type="similarity">
    <text evidence="1">Belongs to the QueC family.</text>
</comment>
<name>QUEC_AERHH</name>
<keyword id="KW-0067">ATP-binding</keyword>
<keyword id="KW-0436">Ligase</keyword>
<keyword id="KW-0479">Metal-binding</keyword>
<keyword id="KW-0547">Nucleotide-binding</keyword>
<keyword id="KW-0671">Queuosine biosynthesis</keyword>
<keyword id="KW-1185">Reference proteome</keyword>
<keyword id="KW-0862">Zinc</keyword>
<organism>
    <name type="scientific">Aeromonas hydrophila subsp. hydrophila (strain ATCC 7966 / DSM 30187 / BCRC 13018 / CCUG 14551 / JCM 1027 / KCTC 2358 / NCIMB 9240 / NCTC 8049)</name>
    <dbReference type="NCBI Taxonomy" id="380703"/>
    <lineage>
        <taxon>Bacteria</taxon>
        <taxon>Pseudomonadati</taxon>
        <taxon>Pseudomonadota</taxon>
        <taxon>Gammaproteobacteria</taxon>
        <taxon>Aeromonadales</taxon>
        <taxon>Aeromonadaceae</taxon>
        <taxon>Aeromonas</taxon>
    </lineage>
</organism>
<feature type="chain" id="PRO_1000069750" description="7-cyano-7-deazaguanine synthase">
    <location>
        <begin position="1"/>
        <end position="235"/>
    </location>
</feature>
<feature type="binding site" evidence="1">
    <location>
        <begin position="8"/>
        <end position="18"/>
    </location>
    <ligand>
        <name>ATP</name>
        <dbReference type="ChEBI" id="CHEBI:30616"/>
    </ligand>
</feature>
<feature type="binding site" evidence="1">
    <location>
        <position position="187"/>
    </location>
    <ligand>
        <name>Zn(2+)</name>
        <dbReference type="ChEBI" id="CHEBI:29105"/>
    </ligand>
</feature>
<feature type="binding site" evidence="1">
    <location>
        <position position="196"/>
    </location>
    <ligand>
        <name>Zn(2+)</name>
        <dbReference type="ChEBI" id="CHEBI:29105"/>
    </ligand>
</feature>
<feature type="binding site" evidence="1">
    <location>
        <position position="199"/>
    </location>
    <ligand>
        <name>Zn(2+)</name>
        <dbReference type="ChEBI" id="CHEBI:29105"/>
    </ligand>
</feature>
<feature type="binding site" evidence="1">
    <location>
        <position position="202"/>
    </location>
    <ligand>
        <name>Zn(2+)</name>
        <dbReference type="ChEBI" id="CHEBI:29105"/>
    </ligand>
</feature>
<accession>A0KJA0</accession>
<dbReference type="EC" id="6.3.4.20" evidence="1"/>
<dbReference type="EMBL" id="CP000462">
    <property type="protein sequence ID" value="ABK37791.1"/>
    <property type="molecule type" value="Genomic_DNA"/>
</dbReference>
<dbReference type="RefSeq" id="WP_011705697.1">
    <property type="nucleotide sequence ID" value="NC_008570.1"/>
</dbReference>
<dbReference type="RefSeq" id="YP_856351.1">
    <property type="nucleotide sequence ID" value="NC_008570.1"/>
</dbReference>
<dbReference type="SMR" id="A0KJA0"/>
<dbReference type="STRING" id="380703.AHA_1816"/>
<dbReference type="EnsemblBacteria" id="ABK37791">
    <property type="protein sequence ID" value="ABK37791"/>
    <property type="gene ID" value="AHA_1816"/>
</dbReference>
<dbReference type="GeneID" id="4490139"/>
<dbReference type="KEGG" id="aha:AHA_1816"/>
<dbReference type="PATRIC" id="fig|380703.7.peg.1832"/>
<dbReference type="eggNOG" id="COG0603">
    <property type="taxonomic scope" value="Bacteria"/>
</dbReference>
<dbReference type="HOGENOM" id="CLU_081854_0_0_6"/>
<dbReference type="OrthoDB" id="9789567at2"/>
<dbReference type="UniPathway" id="UPA00391"/>
<dbReference type="Proteomes" id="UP000000756">
    <property type="component" value="Chromosome"/>
</dbReference>
<dbReference type="GO" id="GO:0005524">
    <property type="term" value="F:ATP binding"/>
    <property type="evidence" value="ECO:0007669"/>
    <property type="project" value="UniProtKB-UniRule"/>
</dbReference>
<dbReference type="GO" id="GO:0016879">
    <property type="term" value="F:ligase activity, forming carbon-nitrogen bonds"/>
    <property type="evidence" value="ECO:0007669"/>
    <property type="project" value="UniProtKB-UniRule"/>
</dbReference>
<dbReference type="GO" id="GO:0008270">
    <property type="term" value="F:zinc ion binding"/>
    <property type="evidence" value="ECO:0007669"/>
    <property type="project" value="UniProtKB-UniRule"/>
</dbReference>
<dbReference type="GO" id="GO:0008616">
    <property type="term" value="P:queuosine biosynthetic process"/>
    <property type="evidence" value="ECO:0007669"/>
    <property type="project" value="UniProtKB-UniRule"/>
</dbReference>
<dbReference type="CDD" id="cd01995">
    <property type="entry name" value="QueC-like"/>
    <property type="match status" value="1"/>
</dbReference>
<dbReference type="FunFam" id="3.40.50.620:FF:000017">
    <property type="entry name" value="7-cyano-7-deazaguanine synthase"/>
    <property type="match status" value="1"/>
</dbReference>
<dbReference type="Gene3D" id="3.40.50.620">
    <property type="entry name" value="HUPs"/>
    <property type="match status" value="1"/>
</dbReference>
<dbReference type="HAMAP" id="MF_01633">
    <property type="entry name" value="QueC"/>
    <property type="match status" value="1"/>
</dbReference>
<dbReference type="InterPro" id="IPR018317">
    <property type="entry name" value="QueC"/>
</dbReference>
<dbReference type="InterPro" id="IPR014729">
    <property type="entry name" value="Rossmann-like_a/b/a_fold"/>
</dbReference>
<dbReference type="NCBIfam" id="TIGR00364">
    <property type="entry name" value="7-cyano-7-deazaguanine synthase QueC"/>
    <property type="match status" value="1"/>
</dbReference>
<dbReference type="NCBIfam" id="NF008317">
    <property type="entry name" value="PRK11106.1"/>
    <property type="match status" value="1"/>
</dbReference>
<dbReference type="PANTHER" id="PTHR42914">
    <property type="entry name" value="7-CYANO-7-DEAZAGUANINE SYNTHASE"/>
    <property type="match status" value="1"/>
</dbReference>
<dbReference type="PANTHER" id="PTHR42914:SF1">
    <property type="entry name" value="7-CYANO-7-DEAZAGUANINE SYNTHASE"/>
    <property type="match status" value="1"/>
</dbReference>
<dbReference type="Pfam" id="PF06508">
    <property type="entry name" value="QueC"/>
    <property type="match status" value="1"/>
</dbReference>
<dbReference type="PIRSF" id="PIRSF006293">
    <property type="entry name" value="ExsB"/>
    <property type="match status" value="1"/>
</dbReference>
<dbReference type="SUPFAM" id="SSF52402">
    <property type="entry name" value="Adenine nucleotide alpha hydrolases-like"/>
    <property type="match status" value="1"/>
</dbReference>
<reference key="1">
    <citation type="journal article" date="2006" name="J. Bacteriol.">
        <title>Genome sequence of Aeromonas hydrophila ATCC 7966T: jack of all trades.</title>
        <authorList>
            <person name="Seshadri R."/>
            <person name="Joseph S.W."/>
            <person name="Chopra A.K."/>
            <person name="Sha J."/>
            <person name="Shaw J."/>
            <person name="Graf J."/>
            <person name="Haft D.H."/>
            <person name="Wu M."/>
            <person name="Ren Q."/>
            <person name="Rosovitz M.J."/>
            <person name="Madupu R."/>
            <person name="Tallon L."/>
            <person name="Kim M."/>
            <person name="Jin S."/>
            <person name="Vuong H."/>
            <person name="Stine O.C."/>
            <person name="Ali A."/>
            <person name="Horneman A.J."/>
            <person name="Heidelberg J.F."/>
        </authorList>
    </citation>
    <scope>NUCLEOTIDE SEQUENCE [LARGE SCALE GENOMIC DNA]</scope>
    <source>
        <strain>ATCC 7966 / DSM 30187 / BCRC 13018 / CCUG 14551 / JCM 1027 / KCTC 2358 / NCIMB 9240 / NCTC 8049</strain>
    </source>
</reference>
<protein>
    <recommendedName>
        <fullName evidence="1">7-cyano-7-deazaguanine synthase</fullName>
        <ecNumber evidence="1">6.3.4.20</ecNumber>
    </recommendedName>
    <alternativeName>
        <fullName evidence="1">7-cyano-7-carbaguanine synthase</fullName>
    </alternativeName>
    <alternativeName>
        <fullName evidence="1">PreQ(0) synthase</fullName>
    </alternativeName>
    <alternativeName>
        <fullName evidence="1">Queuosine biosynthesis protein QueC</fullName>
    </alternativeName>
</protein>